<reference key="1">
    <citation type="journal article" date="2001" name="Proc. Natl. Acad. Sci. U.S.A.">
        <title>Genome sequence of an industrial microorganism Streptomyces avermitilis: deducing the ability of producing secondary metabolites.</title>
        <authorList>
            <person name="Omura S."/>
            <person name="Ikeda H."/>
            <person name="Ishikawa J."/>
            <person name="Hanamoto A."/>
            <person name="Takahashi C."/>
            <person name="Shinose M."/>
            <person name="Takahashi Y."/>
            <person name="Horikawa H."/>
            <person name="Nakazawa H."/>
            <person name="Osonoe T."/>
            <person name="Kikuchi H."/>
            <person name="Shiba T."/>
            <person name="Sakaki Y."/>
            <person name="Hattori M."/>
        </authorList>
    </citation>
    <scope>NUCLEOTIDE SEQUENCE [LARGE SCALE GENOMIC DNA]</scope>
    <source>
        <strain>ATCC 31267 / DSM 46492 / JCM 5070 / NBRC 14893 / NCIMB 12804 / NRRL 8165 / MA-4680</strain>
    </source>
</reference>
<reference key="2">
    <citation type="journal article" date="2003" name="Nat. Biotechnol.">
        <title>Complete genome sequence and comparative analysis of the industrial microorganism Streptomyces avermitilis.</title>
        <authorList>
            <person name="Ikeda H."/>
            <person name="Ishikawa J."/>
            <person name="Hanamoto A."/>
            <person name="Shinose M."/>
            <person name="Kikuchi H."/>
            <person name="Shiba T."/>
            <person name="Sakaki Y."/>
            <person name="Hattori M."/>
            <person name="Omura S."/>
        </authorList>
    </citation>
    <scope>NUCLEOTIDE SEQUENCE [LARGE SCALE GENOMIC DNA]</scope>
    <source>
        <strain>ATCC 31267 / DSM 46492 / JCM 5070 / NBRC 14893 / NCIMB 12804 / NRRL 8165 / MA-4680</strain>
    </source>
</reference>
<dbReference type="EC" id="2.7.1.30" evidence="1"/>
<dbReference type="EMBL" id="BA000030">
    <property type="protein sequence ID" value="BAC74674.1"/>
    <property type="molecule type" value="Genomic_DNA"/>
</dbReference>
<dbReference type="SMR" id="Q827G1"/>
<dbReference type="GeneID" id="41544036"/>
<dbReference type="KEGG" id="sma:SAVERM_6963"/>
<dbReference type="eggNOG" id="COG0554">
    <property type="taxonomic scope" value="Bacteria"/>
</dbReference>
<dbReference type="HOGENOM" id="CLU_009281_2_3_11"/>
<dbReference type="OrthoDB" id="9805576at2"/>
<dbReference type="UniPathway" id="UPA00618">
    <property type="reaction ID" value="UER00672"/>
</dbReference>
<dbReference type="Proteomes" id="UP000000428">
    <property type="component" value="Chromosome"/>
</dbReference>
<dbReference type="GO" id="GO:0005829">
    <property type="term" value="C:cytosol"/>
    <property type="evidence" value="ECO:0007669"/>
    <property type="project" value="TreeGrafter"/>
</dbReference>
<dbReference type="GO" id="GO:0005524">
    <property type="term" value="F:ATP binding"/>
    <property type="evidence" value="ECO:0007669"/>
    <property type="project" value="UniProtKB-UniRule"/>
</dbReference>
<dbReference type="GO" id="GO:0004370">
    <property type="term" value="F:glycerol kinase activity"/>
    <property type="evidence" value="ECO:0000250"/>
    <property type="project" value="UniProtKB"/>
</dbReference>
<dbReference type="GO" id="GO:0019563">
    <property type="term" value="P:glycerol catabolic process"/>
    <property type="evidence" value="ECO:0007669"/>
    <property type="project" value="UniProtKB-UniRule"/>
</dbReference>
<dbReference type="GO" id="GO:0006071">
    <property type="term" value="P:glycerol metabolic process"/>
    <property type="evidence" value="ECO:0000250"/>
    <property type="project" value="UniProtKB"/>
</dbReference>
<dbReference type="GO" id="GO:0006072">
    <property type="term" value="P:glycerol-3-phosphate metabolic process"/>
    <property type="evidence" value="ECO:0007669"/>
    <property type="project" value="InterPro"/>
</dbReference>
<dbReference type="CDD" id="cd07769">
    <property type="entry name" value="ASKHA_NBD_FGGY_GK"/>
    <property type="match status" value="1"/>
</dbReference>
<dbReference type="FunFam" id="3.30.420.40:FF:000007">
    <property type="entry name" value="Glycerol kinase"/>
    <property type="match status" value="1"/>
</dbReference>
<dbReference type="FunFam" id="3.30.420.40:FF:000008">
    <property type="entry name" value="Glycerol kinase"/>
    <property type="match status" value="1"/>
</dbReference>
<dbReference type="Gene3D" id="3.30.420.40">
    <property type="match status" value="2"/>
</dbReference>
<dbReference type="HAMAP" id="MF_00186">
    <property type="entry name" value="Glycerol_kin"/>
    <property type="match status" value="1"/>
</dbReference>
<dbReference type="InterPro" id="IPR043129">
    <property type="entry name" value="ATPase_NBD"/>
</dbReference>
<dbReference type="InterPro" id="IPR000577">
    <property type="entry name" value="Carb_kinase_FGGY"/>
</dbReference>
<dbReference type="InterPro" id="IPR018483">
    <property type="entry name" value="Carb_kinase_FGGY_CS"/>
</dbReference>
<dbReference type="InterPro" id="IPR018485">
    <property type="entry name" value="FGGY_C"/>
</dbReference>
<dbReference type="InterPro" id="IPR018484">
    <property type="entry name" value="FGGY_N"/>
</dbReference>
<dbReference type="InterPro" id="IPR005999">
    <property type="entry name" value="Glycerol_kin"/>
</dbReference>
<dbReference type="NCBIfam" id="TIGR01311">
    <property type="entry name" value="glycerol_kin"/>
    <property type="match status" value="1"/>
</dbReference>
<dbReference type="NCBIfam" id="NF000756">
    <property type="entry name" value="PRK00047.1"/>
    <property type="match status" value="1"/>
</dbReference>
<dbReference type="PANTHER" id="PTHR10196:SF69">
    <property type="entry name" value="GLYCEROL KINASE"/>
    <property type="match status" value="1"/>
</dbReference>
<dbReference type="PANTHER" id="PTHR10196">
    <property type="entry name" value="SUGAR KINASE"/>
    <property type="match status" value="1"/>
</dbReference>
<dbReference type="Pfam" id="PF02782">
    <property type="entry name" value="FGGY_C"/>
    <property type="match status" value="1"/>
</dbReference>
<dbReference type="Pfam" id="PF00370">
    <property type="entry name" value="FGGY_N"/>
    <property type="match status" value="1"/>
</dbReference>
<dbReference type="PIRSF" id="PIRSF000538">
    <property type="entry name" value="GlpK"/>
    <property type="match status" value="1"/>
</dbReference>
<dbReference type="SUPFAM" id="SSF53067">
    <property type="entry name" value="Actin-like ATPase domain"/>
    <property type="match status" value="2"/>
</dbReference>
<dbReference type="PROSITE" id="PS00445">
    <property type="entry name" value="FGGY_KINASES_2"/>
    <property type="match status" value="1"/>
</dbReference>
<proteinExistence type="inferred from homology"/>
<protein>
    <recommendedName>
        <fullName evidence="1">Glycerol kinase 2</fullName>
        <ecNumber evidence="1">2.7.1.30</ecNumber>
    </recommendedName>
    <alternativeName>
        <fullName evidence="1">ATP:glycerol 3-phosphotransferase 2</fullName>
    </alternativeName>
    <alternativeName>
        <fullName evidence="1">Glycerokinase 2</fullName>
        <shortName evidence="1">GK 2</shortName>
    </alternativeName>
</protein>
<comment type="function">
    <text evidence="1">Key enzyme in the regulation of glycerol uptake and metabolism. Catalyzes the phosphorylation of glycerol to yield sn-glycerol 3-phosphate.</text>
</comment>
<comment type="catalytic activity">
    <reaction evidence="1">
        <text>glycerol + ATP = sn-glycerol 3-phosphate + ADP + H(+)</text>
        <dbReference type="Rhea" id="RHEA:21644"/>
        <dbReference type="ChEBI" id="CHEBI:15378"/>
        <dbReference type="ChEBI" id="CHEBI:17754"/>
        <dbReference type="ChEBI" id="CHEBI:30616"/>
        <dbReference type="ChEBI" id="CHEBI:57597"/>
        <dbReference type="ChEBI" id="CHEBI:456216"/>
        <dbReference type="EC" id="2.7.1.30"/>
    </reaction>
</comment>
<comment type="activity regulation">
    <text evidence="1">Inhibited by fructose 1,6-bisphosphate (FBP).</text>
</comment>
<comment type="pathway">
    <text evidence="1">Polyol metabolism; glycerol degradation via glycerol kinase pathway; sn-glycerol 3-phosphate from glycerol: step 1/1.</text>
</comment>
<comment type="similarity">
    <text evidence="1">Belongs to the FGGY kinase family.</text>
</comment>
<name>GLPK2_STRAW</name>
<evidence type="ECO:0000255" key="1">
    <source>
        <dbReference type="HAMAP-Rule" id="MF_00186"/>
    </source>
</evidence>
<accession>Q827G1</accession>
<keyword id="KW-0067">ATP-binding</keyword>
<keyword id="KW-0319">Glycerol metabolism</keyword>
<keyword id="KW-0418">Kinase</keyword>
<keyword id="KW-0547">Nucleotide-binding</keyword>
<keyword id="KW-1185">Reference proteome</keyword>
<keyword id="KW-0808">Transferase</keyword>
<gene>
    <name evidence="1" type="primary">glpK2</name>
    <name type="ordered locus">SAV_6963</name>
</gene>
<organism>
    <name type="scientific">Streptomyces avermitilis (strain ATCC 31267 / DSM 46492 / JCM 5070 / NBRC 14893 / NCIMB 12804 / NRRL 8165 / MA-4680)</name>
    <dbReference type="NCBI Taxonomy" id="227882"/>
    <lineage>
        <taxon>Bacteria</taxon>
        <taxon>Bacillati</taxon>
        <taxon>Actinomycetota</taxon>
        <taxon>Actinomycetes</taxon>
        <taxon>Kitasatosporales</taxon>
        <taxon>Streptomycetaceae</taxon>
        <taxon>Streptomyces</taxon>
    </lineage>
</organism>
<sequence length="507" mass="55047">MPDNAQKYVAAIDQGTTSSRCIIFDHGGAIVAVDQREHRQIFPKPGWVEHDATEIWSKVQAVVAGAIAKAGLRADQLSALGITNQRETTVLWDRATGKPVHNAIVWQDTRTSALCHELGGSDGQDRFREQTGLPLASYFSGPKAAWLLDNVPGLRARAERGEIAFGTIDSWLIWNLTGGTDGGRHVTDVTNAGRTMLMNLETLQWDRSILSAMNVPEAVLPEIRSSSEVYGTAVGQLSGVPVASALGDQQAAVFGQACYDVGTAKNTYGTGSFLLLNTGNRPVPSKNGLLTTMGYKIGGEAPVYCLEGSIAITGALVQWFRDQLGIIRTADEIETLAASVDDNGGAYIVPAFSGLFAPYWRSDARGVVTGLTRYVTKAHLARAVLEATSWQTREVVDAMYQDSGVRITTLKVDGGMTKNNLLMQHQADVLGVPVIRPRVSETTCLGAAYAAGLATGVWNDLDELKSHWQKDVEWTPSMEASERDREYHNWRKAVEKSFGWHEEDGVN</sequence>
<feature type="chain" id="PRO_0000059500" description="Glycerol kinase 2">
    <location>
        <begin position="1"/>
        <end position="507"/>
    </location>
</feature>
<feature type="binding site" evidence="1">
    <location>
        <position position="16"/>
    </location>
    <ligand>
        <name>ADP</name>
        <dbReference type="ChEBI" id="CHEBI:456216"/>
    </ligand>
</feature>
<feature type="binding site" evidence="1">
    <location>
        <position position="16"/>
    </location>
    <ligand>
        <name>ATP</name>
        <dbReference type="ChEBI" id="CHEBI:30616"/>
    </ligand>
</feature>
<feature type="binding site" evidence="1">
    <location>
        <position position="16"/>
    </location>
    <ligand>
        <name>sn-glycerol 3-phosphate</name>
        <dbReference type="ChEBI" id="CHEBI:57597"/>
    </ligand>
</feature>
<feature type="binding site" evidence="1">
    <location>
        <position position="17"/>
    </location>
    <ligand>
        <name>ATP</name>
        <dbReference type="ChEBI" id="CHEBI:30616"/>
    </ligand>
</feature>
<feature type="binding site" evidence="1">
    <location>
        <position position="18"/>
    </location>
    <ligand>
        <name>ATP</name>
        <dbReference type="ChEBI" id="CHEBI:30616"/>
    </ligand>
</feature>
<feature type="binding site" evidence="1">
    <location>
        <position position="20"/>
    </location>
    <ligand>
        <name>ADP</name>
        <dbReference type="ChEBI" id="CHEBI:456216"/>
    </ligand>
</feature>
<feature type="binding site" evidence="1">
    <location>
        <position position="86"/>
    </location>
    <ligand>
        <name>glycerol</name>
        <dbReference type="ChEBI" id="CHEBI:17754"/>
    </ligand>
</feature>
<feature type="binding site" evidence="1">
    <location>
        <position position="86"/>
    </location>
    <ligand>
        <name>sn-glycerol 3-phosphate</name>
        <dbReference type="ChEBI" id="CHEBI:57597"/>
    </ligand>
</feature>
<feature type="binding site" evidence="1">
    <location>
        <position position="87"/>
    </location>
    <ligand>
        <name>glycerol</name>
        <dbReference type="ChEBI" id="CHEBI:17754"/>
    </ligand>
</feature>
<feature type="binding site" evidence="1">
    <location>
        <position position="87"/>
    </location>
    <ligand>
        <name>sn-glycerol 3-phosphate</name>
        <dbReference type="ChEBI" id="CHEBI:57597"/>
    </ligand>
</feature>
<feature type="binding site" evidence="1">
    <location>
        <position position="138"/>
    </location>
    <ligand>
        <name>glycerol</name>
        <dbReference type="ChEBI" id="CHEBI:17754"/>
    </ligand>
</feature>
<feature type="binding site" evidence="1">
    <location>
        <position position="138"/>
    </location>
    <ligand>
        <name>sn-glycerol 3-phosphate</name>
        <dbReference type="ChEBI" id="CHEBI:57597"/>
    </ligand>
</feature>
<feature type="binding site" evidence="1">
    <location>
        <position position="248"/>
    </location>
    <ligand>
        <name>glycerol</name>
        <dbReference type="ChEBI" id="CHEBI:17754"/>
    </ligand>
</feature>
<feature type="binding site" evidence="1">
    <location>
        <position position="248"/>
    </location>
    <ligand>
        <name>sn-glycerol 3-phosphate</name>
        <dbReference type="ChEBI" id="CHEBI:57597"/>
    </ligand>
</feature>
<feature type="binding site" evidence="1">
    <location>
        <position position="249"/>
    </location>
    <ligand>
        <name>glycerol</name>
        <dbReference type="ChEBI" id="CHEBI:17754"/>
    </ligand>
</feature>
<feature type="binding site" evidence="1">
    <location>
        <position position="270"/>
    </location>
    <ligand>
        <name>ADP</name>
        <dbReference type="ChEBI" id="CHEBI:456216"/>
    </ligand>
</feature>
<feature type="binding site" evidence="1">
    <location>
        <position position="270"/>
    </location>
    <ligand>
        <name>ATP</name>
        <dbReference type="ChEBI" id="CHEBI:30616"/>
    </ligand>
</feature>
<feature type="binding site" evidence="1">
    <location>
        <position position="314"/>
    </location>
    <ligand>
        <name>ADP</name>
        <dbReference type="ChEBI" id="CHEBI:456216"/>
    </ligand>
</feature>
<feature type="binding site" evidence="1">
    <location>
        <position position="314"/>
    </location>
    <ligand>
        <name>ATP</name>
        <dbReference type="ChEBI" id="CHEBI:30616"/>
    </ligand>
</feature>
<feature type="binding site" evidence="1">
    <location>
        <position position="318"/>
    </location>
    <ligand>
        <name>ATP</name>
        <dbReference type="ChEBI" id="CHEBI:30616"/>
    </ligand>
</feature>
<feature type="binding site" evidence="1">
    <location>
        <position position="415"/>
    </location>
    <ligand>
        <name>ADP</name>
        <dbReference type="ChEBI" id="CHEBI:456216"/>
    </ligand>
</feature>
<feature type="binding site" evidence="1">
    <location>
        <position position="415"/>
    </location>
    <ligand>
        <name>ATP</name>
        <dbReference type="ChEBI" id="CHEBI:30616"/>
    </ligand>
</feature>
<feature type="binding site" evidence="1">
    <location>
        <position position="419"/>
    </location>
    <ligand>
        <name>ADP</name>
        <dbReference type="ChEBI" id="CHEBI:456216"/>
    </ligand>
</feature>